<sequence>MFNTHKVEIEWGGRPLTLETGKIARQADGAVLATYGETAVLATVVSAKEPKPGQDFFPLTVNYQEKTYAAGKIPGGYFKREGRPSENETLVSRLIDRPIRPLFVDGYKNDTQVVITVLQHDLENNPDILSMVAASAALTISGVPFMGPISGARVGYIDGEYVLNPNIDEMPESKLDLVVAGTSEAVLMVESEAQELPEDVMLGAVMFGHKSFQPVIDAIIKLAEVAAKEPRDFQPEDLSELEAKVLAVVENDLREAYKITEKQARYAAVDAAKAKAKEHFFPEGVEETEMSAEQFATIFKHLQAKIVRWNILDTGNRIDGRDLSTVRPIVSEVGILPRTHGSALFTRGETQAIVVATLGTGEDEQMIDALTGTYKESFMLHYNFPPYSVGETGRMGSPGRREIGHGKLAWRAIHPMLPAAEQFPYTIRAVSEITESNGSSSMATVCGTSLALMDAGVPIVRPVAGIAMGLIKEGERFAVLSDILGDEDHLGDMDFKVAGTEFGITSLQMDIKIDGITEEIMKVALEQAKGGRVHILGEMAKAISSSRAELGEFAPRIEVMNIPTDKIRDVIGSGGKVIREIVEKTGAKINIEDDGTVKIASSNGKEIEAAKKWIHSIVAEPEVGEIYEGTVVKTADFGAFVNFFGPRDGLVHISQLAADRVAKTTDVVKEGQKVWVKLMGFDERGKVRLSMKVVDQETGKEIVAEKKKEEVDAE</sequence>
<comment type="function">
    <text evidence="1">Involved in mRNA degradation. Catalyzes the phosphorolysis of single-stranded polyribonucleotides processively in the 3'- to 5'-direction.</text>
</comment>
<comment type="catalytic activity">
    <reaction evidence="1">
        <text>RNA(n+1) + phosphate = RNA(n) + a ribonucleoside 5'-diphosphate</text>
        <dbReference type="Rhea" id="RHEA:22096"/>
        <dbReference type="Rhea" id="RHEA-COMP:14527"/>
        <dbReference type="Rhea" id="RHEA-COMP:17342"/>
        <dbReference type="ChEBI" id="CHEBI:43474"/>
        <dbReference type="ChEBI" id="CHEBI:57930"/>
        <dbReference type="ChEBI" id="CHEBI:140395"/>
        <dbReference type="EC" id="2.7.7.8"/>
    </reaction>
</comment>
<comment type="cofactor">
    <cofactor evidence="1">
        <name>Mg(2+)</name>
        <dbReference type="ChEBI" id="CHEBI:18420"/>
    </cofactor>
</comment>
<comment type="subcellular location">
    <subcellularLocation>
        <location evidence="1">Cytoplasm</location>
    </subcellularLocation>
</comment>
<comment type="similarity">
    <text evidence="1">Belongs to the polyribonucleotide nucleotidyltransferase family.</text>
</comment>
<feature type="chain" id="PRO_0000329545" description="Polyribonucleotide nucleotidyltransferase">
    <location>
        <begin position="1"/>
        <end position="714"/>
    </location>
</feature>
<feature type="domain" description="KH" evidence="1">
    <location>
        <begin position="555"/>
        <end position="614"/>
    </location>
</feature>
<feature type="domain" description="S1 motif" evidence="1">
    <location>
        <begin position="624"/>
        <end position="692"/>
    </location>
</feature>
<feature type="binding site" evidence="1">
    <location>
        <position position="488"/>
    </location>
    <ligand>
        <name>Mg(2+)</name>
        <dbReference type="ChEBI" id="CHEBI:18420"/>
    </ligand>
</feature>
<feature type="binding site" evidence="1">
    <location>
        <position position="494"/>
    </location>
    <ligand>
        <name>Mg(2+)</name>
        <dbReference type="ChEBI" id="CHEBI:18420"/>
    </ligand>
</feature>
<organism>
    <name type="scientific">Brucella abortus biovar 1 (strain 9-941)</name>
    <dbReference type="NCBI Taxonomy" id="262698"/>
    <lineage>
        <taxon>Bacteria</taxon>
        <taxon>Pseudomonadati</taxon>
        <taxon>Pseudomonadota</taxon>
        <taxon>Alphaproteobacteria</taxon>
        <taxon>Hyphomicrobiales</taxon>
        <taxon>Brucellaceae</taxon>
        <taxon>Brucella/Ochrobactrum group</taxon>
        <taxon>Brucella</taxon>
    </lineage>
</organism>
<gene>
    <name evidence="1" type="primary">pnp</name>
    <name type="ordered locus">BruAb1_2142</name>
</gene>
<keyword id="KW-0963">Cytoplasm</keyword>
<keyword id="KW-0460">Magnesium</keyword>
<keyword id="KW-0479">Metal-binding</keyword>
<keyword id="KW-0548">Nucleotidyltransferase</keyword>
<keyword id="KW-0694">RNA-binding</keyword>
<keyword id="KW-0808">Transferase</keyword>
<reference key="1">
    <citation type="journal article" date="2005" name="J. Bacteriol.">
        <title>Completion of the genome sequence of Brucella abortus and comparison to the highly similar genomes of Brucella melitensis and Brucella suis.</title>
        <authorList>
            <person name="Halling S.M."/>
            <person name="Peterson-Burch B.D."/>
            <person name="Bricker B.J."/>
            <person name="Zuerner R.L."/>
            <person name="Qing Z."/>
            <person name="Li L.-L."/>
            <person name="Kapur V."/>
            <person name="Alt D.P."/>
            <person name="Olsen S.C."/>
        </authorList>
    </citation>
    <scope>NUCLEOTIDE SEQUENCE [LARGE SCALE GENOMIC DNA]</scope>
    <source>
        <strain>9-941</strain>
    </source>
</reference>
<accession>Q57A96</accession>
<dbReference type="EC" id="2.7.7.8" evidence="1"/>
<dbReference type="EMBL" id="AE017223">
    <property type="protein sequence ID" value="AAX75438.1"/>
    <property type="molecule type" value="Genomic_DNA"/>
</dbReference>
<dbReference type="RefSeq" id="WP_002965231.1">
    <property type="nucleotide sequence ID" value="NC_006932.1"/>
</dbReference>
<dbReference type="SMR" id="Q57A96"/>
<dbReference type="EnsemblBacteria" id="AAX75438">
    <property type="protein sequence ID" value="AAX75438"/>
    <property type="gene ID" value="BruAb1_2142"/>
</dbReference>
<dbReference type="GeneID" id="97534578"/>
<dbReference type="KEGG" id="bmb:BruAb1_2142"/>
<dbReference type="HOGENOM" id="CLU_004217_2_2_5"/>
<dbReference type="Proteomes" id="UP000000540">
    <property type="component" value="Chromosome I"/>
</dbReference>
<dbReference type="GO" id="GO:0005829">
    <property type="term" value="C:cytosol"/>
    <property type="evidence" value="ECO:0007669"/>
    <property type="project" value="TreeGrafter"/>
</dbReference>
<dbReference type="GO" id="GO:0000175">
    <property type="term" value="F:3'-5'-RNA exonuclease activity"/>
    <property type="evidence" value="ECO:0007669"/>
    <property type="project" value="TreeGrafter"/>
</dbReference>
<dbReference type="GO" id="GO:0000287">
    <property type="term" value="F:magnesium ion binding"/>
    <property type="evidence" value="ECO:0007669"/>
    <property type="project" value="UniProtKB-UniRule"/>
</dbReference>
<dbReference type="GO" id="GO:0004654">
    <property type="term" value="F:polyribonucleotide nucleotidyltransferase activity"/>
    <property type="evidence" value="ECO:0007669"/>
    <property type="project" value="UniProtKB-UniRule"/>
</dbReference>
<dbReference type="GO" id="GO:0003723">
    <property type="term" value="F:RNA binding"/>
    <property type="evidence" value="ECO:0007669"/>
    <property type="project" value="UniProtKB-UniRule"/>
</dbReference>
<dbReference type="GO" id="GO:0006402">
    <property type="term" value="P:mRNA catabolic process"/>
    <property type="evidence" value="ECO:0007669"/>
    <property type="project" value="UniProtKB-UniRule"/>
</dbReference>
<dbReference type="GO" id="GO:0006396">
    <property type="term" value="P:RNA processing"/>
    <property type="evidence" value="ECO:0007669"/>
    <property type="project" value="InterPro"/>
</dbReference>
<dbReference type="CDD" id="cd02393">
    <property type="entry name" value="KH-I_PNPase"/>
    <property type="match status" value="1"/>
</dbReference>
<dbReference type="CDD" id="cd11363">
    <property type="entry name" value="RNase_PH_PNPase_1"/>
    <property type="match status" value="1"/>
</dbReference>
<dbReference type="CDD" id="cd11364">
    <property type="entry name" value="RNase_PH_PNPase_2"/>
    <property type="match status" value="1"/>
</dbReference>
<dbReference type="CDD" id="cd04472">
    <property type="entry name" value="S1_PNPase"/>
    <property type="match status" value="1"/>
</dbReference>
<dbReference type="FunFam" id="2.40.50.140:FF:000107">
    <property type="entry name" value="Polyribonucleotide nucleotidyltransferase"/>
    <property type="match status" value="1"/>
</dbReference>
<dbReference type="FunFam" id="3.30.1370.10:FF:000001">
    <property type="entry name" value="Polyribonucleotide nucleotidyltransferase"/>
    <property type="match status" value="1"/>
</dbReference>
<dbReference type="FunFam" id="3.30.230.70:FF:000001">
    <property type="entry name" value="Polyribonucleotide nucleotidyltransferase"/>
    <property type="match status" value="1"/>
</dbReference>
<dbReference type="FunFam" id="3.30.230.70:FF:000002">
    <property type="entry name" value="Polyribonucleotide nucleotidyltransferase"/>
    <property type="match status" value="1"/>
</dbReference>
<dbReference type="Gene3D" id="3.30.230.70">
    <property type="entry name" value="GHMP Kinase, N-terminal domain"/>
    <property type="match status" value="2"/>
</dbReference>
<dbReference type="Gene3D" id="3.30.1370.10">
    <property type="entry name" value="K Homology domain, type 1"/>
    <property type="match status" value="1"/>
</dbReference>
<dbReference type="Gene3D" id="2.40.50.140">
    <property type="entry name" value="Nucleic acid-binding proteins"/>
    <property type="match status" value="1"/>
</dbReference>
<dbReference type="HAMAP" id="MF_01595">
    <property type="entry name" value="PNPase"/>
    <property type="match status" value="1"/>
</dbReference>
<dbReference type="InterPro" id="IPR001247">
    <property type="entry name" value="ExoRNase_PH_dom1"/>
</dbReference>
<dbReference type="InterPro" id="IPR015847">
    <property type="entry name" value="ExoRNase_PH_dom2"/>
</dbReference>
<dbReference type="InterPro" id="IPR036345">
    <property type="entry name" value="ExoRNase_PH_dom2_sf"/>
</dbReference>
<dbReference type="InterPro" id="IPR004087">
    <property type="entry name" value="KH_dom"/>
</dbReference>
<dbReference type="InterPro" id="IPR004088">
    <property type="entry name" value="KH_dom_type_1"/>
</dbReference>
<dbReference type="InterPro" id="IPR036612">
    <property type="entry name" value="KH_dom_type_1_sf"/>
</dbReference>
<dbReference type="InterPro" id="IPR012340">
    <property type="entry name" value="NA-bd_OB-fold"/>
</dbReference>
<dbReference type="InterPro" id="IPR012162">
    <property type="entry name" value="PNPase"/>
</dbReference>
<dbReference type="InterPro" id="IPR027408">
    <property type="entry name" value="PNPase/RNase_PH_dom_sf"/>
</dbReference>
<dbReference type="InterPro" id="IPR015848">
    <property type="entry name" value="PNPase_PH_RNA-bd_bac/org-type"/>
</dbReference>
<dbReference type="InterPro" id="IPR020568">
    <property type="entry name" value="Ribosomal_Su5_D2-typ_SF"/>
</dbReference>
<dbReference type="InterPro" id="IPR003029">
    <property type="entry name" value="S1_domain"/>
</dbReference>
<dbReference type="NCBIfam" id="TIGR03591">
    <property type="entry name" value="polynuc_phos"/>
    <property type="match status" value="1"/>
</dbReference>
<dbReference type="NCBIfam" id="NF008805">
    <property type="entry name" value="PRK11824.1"/>
    <property type="match status" value="1"/>
</dbReference>
<dbReference type="PANTHER" id="PTHR11252">
    <property type="entry name" value="POLYRIBONUCLEOTIDE NUCLEOTIDYLTRANSFERASE"/>
    <property type="match status" value="1"/>
</dbReference>
<dbReference type="PANTHER" id="PTHR11252:SF0">
    <property type="entry name" value="POLYRIBONUCLEOTIDE NUCLEOTIDYLTRANSFERASE 1, MITOCHONDRIAL"/>
    <property type="match status" value="1"/>
</dbReference>
<dbReference type="Pfam" id="PF00013">
    <property type="entry name" value="KH_1"/>
    <property type="match status" value="1"/>
</dbReference>
<dbReference type="Pfam" id="PF03726">
    <property type="entry name" value="PNPase"/>
    <property type="match status" value="1"/>
</dbReference>
<dbReference type="Pfam" id="PF01138">
    <property type="entry name" value="RNase_PH"/>
    <property type="match status" value="2"/>
</dbReference>
<dbReference type="Pfam" id="PF03725">
    <property type="entry name" value="RNase_PH_C"/>
    <property type="match status" value="2"/>
</dbReference>
<dbReference type="Pfam" id="PF00575">
    <property type="entry name" value="S1"/>
    <property type="match status" value="1"/>
</dbReference>
<dbReference type="PIRSF" id="PIRSF005499">
    <property type="entry name" value="PNPase"/>
    <property type="match status" value="1"/>
</dbReference>
<dbReference type="SMART" id="SM00322">
    <property type="entry name" value="KH"/>
    <property type="match status" value="1"/>
</dbReference>
<dbReference type="SMART" id="SM00316">
    <property type="entry name" value="S1"/>
    <property type="match status" value="1"/>
</dbReference>
<dbReference type="SUPFAM" id="SSF54791">
    <property type="entry name" value="Eukaryotic type KH-domain (KH-domain type I)"/>
    <property type="match status" value="1"/>
</dbReference>
<dbReference type="SUPFAM" id="SSF50249">
    <property type="entry name" value="Nucleic acid-binding proteins"/>
    <property type="match status" value="1"/>
</dbReference>
<dbReference type="SUPFAM" id="SSF55666">
    <property type="entry name" value="Ribonuclease PH domain 2-like"/>
    <property type="match status" value="2"/>
</dbReference>
<dbReference type="SUPFAM" id="SSF54211">
    <property type="entry name" value="Ribosomal protein S5 domain 2-like"/>
    <property type="match status" value="2"/>
</dbReference>
<dbReference type="PROSITE" id="PS50084">
    <property type="entry name" value="KH_TYPE_1"/>
    <property type="match status" value="1"/>
</dbReference>
<dbReference type="PROSITE" id="PS50126">
    <property type="entry name" value="S1"/>
    <property type="match status" value="1"/>
</dbReference>
<protein>
    <recommendedName>
        <fullName evidence="1">Polyribonucleotide nucleotidyltransferase</fullName>
        <ecNumber evidence="1">2.7.7.8</ecNumber>
    </recommendedName>
    <alternativeName>
        <fullName evidence="1">Polynucleotide phosphorylase</fullName>
        <shortName evidence="1">PNPase</shortName>
    </alternativeName>
</protein>
<proteinExistence type="inferred from homology"/>
<name>PNP_BRUAB</name>
<evidence type="ECO:0000255" key="1">
    <source>
        <dbReference type="HAMAP-Rule" id="MF_01595"/>
    </source>
</evidence>